<protein>
    <recommendedName>
        <fullName>Disabled homolog 2</fullName>
    </recommendedName>
    <alternativeName>
        <fullName>Adaptor molecule disabled-2</fullName>
    </alternativeName>
    <alternativeName>
        <fullName>C9</fullName>
    </alternativeName>
    <alternativeName>
        <fullName>Differentially expressed in ovarian carcinoma 2</fullName>
        <shortName>DOC-2</shortName>
    </alternativeName>
    <alternativeName>
        <fullName>Mitogen-responsive phosphoprotein</fullName>
    </alternativeName>
</protein>
<reference key="1">
    <citation type="journal article" date="1998" name="Endocrinology">
        <title>Regulation of rat DOC-2 gene during castration-induced rat ventral prostate degeneration and its growth inhibitory function in human prostatic carcinoma cells.</title>
        <authorList>
            <person name="Tseng C.-P."/>
            <person name="Ely B.D."/>
            <person name="Li Y."/>
            <person name="Pong R.-C."/>
            <person name="Hsieh J.-T."/>
        </authorList>
    </citation>
    <scope>NUCLEOTIDE SEQUENCE [MRNA] (ISOFORMS P59 AND P82)</scope>
    <scope>TISSUE SPECIFICITY</scope>
    <source>
        <strain>Sprague-Dawley</strain>
        <tissue>Prostate</tissue>
    </source>
</reference>
<reference key="2">
    <citation type="journal article" date="2004" name="Genome Res.">
        <title>The status, quality, and expansion of the NIH full-length cDNA project: the Mammalian Gene Collection (MGC).</title>
        <authorList>
            <consortium name="The MGC Project Team"/>
        </authorList>
    </citation>
    <scope>NUCLEOTIDE SEQUENCE [LARGE SCALE MRNA] (ISOFORM P82)</scope>
    <source>
        <tissue>Placenta</tissue>
    </source>
</reference>
<reference key="3">
    <citation type="submission" date="1998-02" db="EMBL/GenBank/DDBJ databases">
        <authorList>
            <person name="Lau K.M."/>
            <person name="Mok S.C."/>
            <person name="Ho S.M."/>
        </authorList>
    </citation>
    <scope>NUCLEOTIDE SEQUENCE [MRNA] OF 2-47; 117-189; 634-687 AND 753-768</scope>
    <source>
        <tissue>Kidney</tissue>
        <tissue>Prostate</tissue>
    </source>
</reference>
<reference key="4">
    <citation type="journal article" date="2002" name="J. Biol. Chem.">
        <title>The mechanism of growth-inhibitory effect of DOC-2/DAB2 in prostate cancer. Characterization of a novel GTPase-activating protein associated with N-terminal domain of DOC-2/DAB2.</title>
        <authorList>
            <person name="Wang Z."/>
            <person name="Tseng C.-P."/>
            <person name="Pong R.-C."/>
            <person name="Chen H."/>
            <person name="McConnell J.D."/>
            <person name="Navone N."/>
            <person name="Hsieh J.-T."/>
        </authorList>
    </citation>
    <scope>INTERACTION WITH DAB2IP</scope>
</reference>
<reference key="5">
    <citation type="journal article" date="2003" name="J. Biol. Chem.">
        <title>Characterization of a novel negative regulator (DOC-2/DAB2) of c-Src in normal prostatic epithelium and cancer.</title>
        <authorList>
            <person name="Zhou J."/>
            <person name="Scholes J."/>
            <person name="Hsieh J.T."/>
        </authorList>
    </citation>
    <scope>FUNCTION</scope>
    <scope>INTERACTION WITH GRB2 AND SRC</scope>
</reference>
<reference key="6">
    <citation type="journal article" date="2009" name="Biochem. J.">
        <title>Dab2 regulates clathrin assembly and cell spreading.</title>
        <authorList>
            <person name="Chetrit D."/>
            <person name="Ziv N."/>
            <person name="Ehrlich M."/>
        </authorList>
    </citation>
    <scope>FUNCTION</scope>
</reference>
<reference key="7">
    <citation type="journal article" date="2011" name="J. Biol. Chem.">
        <title>Negative regulation of the endocytic adaptor disabled-2 (Dab2) in mitosis.</title>
        <authorList>
            <person name="Chetrit D."/>
            <person name="Barzilay L."/>
            <person name="Horn G."/>
            <person name="Bielik T."/>
            <person name="Smorodinsky N.I."/>
            <person name="Ehrlich M."/>
        </authorList>
    </citation>
    <scope>PHOSPHORYLATION AT SER-326; SER-328 AND SER-401</scope>
    <scope>MUTAGENESIS OF SER-393; SER-394 AND SER-401</scope>
</reference>
<reference key="8">
    <citation type="journal article" date="2012" name="Nat. Commun.">
        <title>Quantitative maps of protein phosphorylation sites across 14 different rat organs and tissues.</title>
        <authorList>
            <person name="Lundby A."/>
            <person name="Secher A."/>
            <person name="Lage K."/>
            <person name="Nordsborg N.B."/>
            <person name="Dmytriyev A."/>
            <person name="Lundby C."/>
            <person name="Olsen J.V."/>
        </authorList>
    </citation>
    <scope>PHOSPHORYLATION [LARGE SCALE ANALYSIS] AT SER-2; SER-193; SER-401 AND SER-729</scope>
    <scope>IDENTIFICATION BY MASS SPECTROMETRY [LARGE SCALE ANALYSIS]</scope>
</reference>
<reference key="9">
    <citation type="journal article" date="2009" name="Cell">
        <title>Myosin VI undergoes cargo-mediated dimerization.</title>
        <authorList>
            <person name="Yu C."/>
            <person name="Feng W."/>
            <person name="Wei Z."/>
            <person name="Miyanoiri Y."/>
            <person name="Wen W."/>
            <person name="Zhao Y."/>
            <person name="Zhang M."/>
        </authorList>
    </citation>
    <scope>X-RAY CRYSTALLOGRAPHY (2.2 ANGSTROMS) OF 675-713 IN COMPLEX WITH MYO6</scope>
</reference>
<feature type="initiator methionine" description="Removed" evidence="3">
    <location>
        <position position="1"/>
    </location>
</feature>
<feature type="chain" id="PRO_0000079772" description="Disabled homolog 2">
    <location>
        <begin position="2"/>
        <end position="768"/>
    </location>
</feature>
<feature type="domain" description="PID" evidence="4">
    <location>
        <begin position="45"/>
        <end position="196"/>
    </location>
</feature>
<feature type="region of interest" description="Disordered" evidence="5">
    <location>
        <begin position="1"/>
        <end position="36"/>
    </location>
</feature>
<feature type="region of interest" description="Required for localization to clathrin-coated pits" evidence="1">
    <location>
        <begin position="230"/>
        <end position="447"/>
    </location>
</feature>
<feature type="region of interest" description="Disordered" evidence="5">
    <location>
        <begin position="285"/>
        <end position="449"/>
    </location>
</feature>
<feature type="region of interest" description="Sufficient for interaction with GRB2" evidence="1">
    <location>
        <begin position="601"/>
        <end position="731"/>
    </location>
</feature>
<feature type="region of interest" description="Required for interaction with CSK">
    <location>
        <begin position="619"/>
        <end position="627"/>
    </location>
</feature>
<feature type="region of interest" description="Required for interaction with MYO6" evidence="1">
    <location>
        <begin position="649"/>
        <end position="768"/>
    </location>
</feature>
<feature type="region of interest" description="Disordered" evidence="5">
    <location>
        <begin position="660"/>
        <end position="682"/>
    </location>
</feature>
<feature type="region of interest" description="Required for interaction with GRB2 and CSK" evidence="7">
    <location>
        <begin position="663"/>
        <end position="671"/>
    </location>
</feature>
<feature type="region of interest" description="Sufficient for interaction with SH3KBP1 SH3 domain" evidence="1">
    <location>
        <begin position="708"/>
        <end position="724"/>
    </location>
</feature>
<feature type="region of interest" description="Disordered" evidence="5">
    <location>
        <begin position="709"/>
        <end position="768"/>
    </location>
</feature>
<feature type="short sequence motif" description="DPF 1">
    <location>
        <begin position="293"/>
        <end position="295"/>
    </location>
</feature>
<feature type="short sequence motif" description="DPF 2">
    <location>
        <begin position="298"/>
        <end position="300"/>
    </location>
</feature>
<feature type="compositionally biased region" description="Polar residues" evidence="5">
    <location>
        <begin position="1"/>
        <end position="16"/>
    </location>
</feature>
<feature type="compositionally biased region" description="Polar residues" evidence="5">
    <location>
        <begin position="303"/>
        <end position="317"/>
    </location>
</feature>
<feature type="compositionally biased region" description="Polar residues" evidence="5">
    <location>
        <begin position="325"/>
        <end position="334"/>
    </location>
</feature>
<feature type="compositionally biased region" description="Polar residues" evidence="5">
    <location>
        <begin position="367"/>
        <end position="381"/>
    </location>
</feature>
<feature type="compositionally biased region" description="Polar residues" evidence="5">
    <location>
        <begin position="724"/>
        <end position="755"/>
    </location>
</feature>
<feature type="modified residue" description="N-acetylserine" evidence="3">
    <location>
        <position position="2"/>
    </location>
</feature>
<feature type="modified residue" description="Phosphoserine" evidence="15">
    <location>
        <position position="2"/>
    </location>
</feature>
<feature type="modified residue" description="Phosphotyrosine" evidence="2">
    <location>
        <position position="170"/>
    </location>
</feature>
<feature type="modified residue" description="Phosphoserine" evidence="15">
    <location>
        <position position="193"/>
    </location>
</feature>
<feature type="modified residue" description="Phosphoserine; in mitosis" evidence="14">
    <location>
        <position position="326"/>
    </location>
</feature>
<feature type="modified residue" description="Phosphoserine; in mitosis" evidence="14">
    <location>
        <position position="328"/>
    </location>
</feature>
<feature type="modified residue" description="Phosphoserine" evidence="15">
    <location>
        <position position="401"/>
    </location>
</feature>
<feature type="modified residue" description="Phosphothreonine" evidence="2">
    <location>
        <position position="673"/>
    </location>
</feature>
<feature type="modified residue" description="Phosphoserine" evidence="3">
    <location>
        <position position="675"/>
    </location>
</feature>
<feature type="modified residue" description="Phosphoserine" evidence="15">
    <location>
        <position position="729"/>
    </location>
</feature>
<feature type="modified residue" description="Phosphoserine" evidence="2">
    <location>
        <position position="761"/>
    </location>
</feature>
<feature type="splice variant" id="VSP_004184" description="In isoform p59." evidence="12">
    <location>
        <begin position="230"/>
        <end position="447"/>
    </location>
</feature>
<feature type="mutagenesis site" description="Reduces phosphorylation, reduces mitotic membrane displacement; when associated with A-394 and A-401." evidence="10">
    <original>S</original>
    <variation>A</variation>
    <location>
        <position position="393"/>
    </location>
</feature>
<feature type="mutagenesis site" description="Reduces phosphorylation, reduces mitotic membrane displacement; when associated with A-393 and A-401." evidence="10">
    <original>S</original>
    <variation>A</variation>
    <location>
        <position position="394"/>
    </location>
</feature>
<feature type="mutagenesis site" description="Reduces phosphorylation, reduces mitotic membrane displacement; when associated with A-393 and A-394." evidence="10">
    <original>S</original>
    <variation>A</variation>
    <location>
        <position position="401"/>
    </location>
</feature>
<feature type="sequence conflict" description="In Ref. 3; AAC03360." evidence="13" ref="3">
    <original>NE</original>
    <variation>TN</variation>
    <location>
        <begin position="3"/>
        <end position="4"/>
    </location>
</feature>
<feature type="sequence conflict" description="In Ref. 3; AAC03361." evidence="13" ref="3">
    <original>N</original>
    <variation>K</variation>
    <location>
        <position position="186"/>
    </location>
</feature>
<feature type="sequence conflict" description="In Ref. 3; AAC03362." evidence="13" ref="3">
    <original>S</original>
    <variation>P</variation>
    <location>
        <position position="675"/>
    </location>
</feature>
<feature type="sequence conflict" description="In Ref. 3; AAC03363." evidence="13" ref="3">
    <original>GNPFA</original>
    <variation>WKSFC</variation>
    <location>
        <begin position="764"/>
        <end position="768"/>
    </location>
</feature>
<feature type="helix" evidence="16">
    <location>
        <begin position="680"/>
        <end position="689"/>
    </location>
</feature>
<feature type="helix" evidence="16">
    <location>
        <begin position="699"/>
        <end position="711"/>
    </location>
</feature>
<evidence type="ECO:0000250" key="1"/>
<evidence type="ECO:0000250" key="2">
    <source>
        <dbReference type="UniProtKB" id="P98078"/>
    </source>
</evidence>
<evidence type="ECO:0000250" key="3">
    <source>
        <dbReference type="UniProtKB" id="P98082"/>
    </source>
</evidence>
<evidence type="ECO:0000255" key="4">
    <source>
        <dbReference type="PROSITE-ProRule" id="PRU00148"/>
    </source>
</evidence>
<evidence type="ECO:0000256" key="5">
    <source>
        <dbReference type="SAM" id="MobiDB-lite"/>
    </source>
</evidence>
<evidence type="ECO:0000269" key="6">
    <source>
    </source>
</evidence>
<evidence type="ECO:0000269" key="7">
    <source>
    </source>
</evidence>
<evidence type="ECO:0000269" key="8">
    <source>
    </source>
</evidence>
<evidence type="ECO:0000269" key="9">
    <source>
    </source>
</evidence>
<evidence type="ECO:0000269" key="10">
    <source>
    </source>
</evidence>
<evidence type="ECO:0000269" key="11">
    <source>
    </source>
</evidence>
<evidence type="ECO:0000303" key="12">
    <source>
    </source>
</evidence>
<evidence type="ECO:0000305" key="13"/>
<evidence type="ECO:0000305" key="14">
    <source>
    </source>
</evidence>
<evidence type="ECO:0007744" key="15">
    <source>
    </source>
</evidence>
<evidence type="ECO:0007829" key="16">
    <source>
        <dbReference type="PDB" id="3H8D"/>
    </source>
</evidence>
<name>DAB2_RAT</name>
<sequence length="768" mass="82377">MSNEVETSTTNGQPDQQAAPKAPSKKEKKKGSEKTDEYLLARFKGDGVKYKAKLIGIDDVPDARGDKMSQDSMMKLKGMAAAGRSQGQHKQRIWVNISLSGIKIIDEKTGVIEHEHPVNKISFIARDVTDNRAFGYVCGGEGQHQFFAIKTGQQAEPLVVDLKDLFQVIYNVKKKEEEKKKVEEANKAEENGSEALMTLDDQANKLKLGVDQMDLFGDMSTPPDLNNPTESRDILLVDLNSEIDTNQNSLRENPFLTNGVTSCSLPRPKPQASFLPESAFSANLNFFPTPNPDPFRDDPFAQPDQSAPSSFHSLTSADQKKANPGSLSTPQSKGPLNGDTDYFGQQFDQISNRTGKQEAQGGPWPYPSSQTQQAVRTQNGVSEKEQNGFHIKSSPNPFVGSPPKGLSVPNGVKQDLESSVQSSAHDSIAIIPPPQSTKPGRGRRTAKSSANDLLASDIFASEPPGQMSPTGQPAVPQANFMDLFKTSAPAPMGSGPLVGLGTVPVTPPQAGPWTPVVFTPSTTVVPGAIISGQPSGFGQPLVFGTTPAVQVWNQPSSFATAASPPPPAVWCPTTSVAPNTWSSTSPLGNPFQSSNIFPPSTISTQSFPQPMMSSVLVTPPQPPPRNGPLKDTLSDAFTGLDPLGDKEVKEVKEMFKDFQLRQPPLVPSRKGETPSSGTSSAFSSYFNNKVGIPQEHVDHDDFDANQLLNKINEPPKPAPRQGVLSGTKSADNSLENPFSKGFSSTNPSVVSQPASSDAHRSPFGNPFA</sequence>
<gene>
    <name type="primary">Dab2</name>
    <name type="synonym">Doc2</name>
</gene>
<proteinExistence type="evidence at protein level"/>
<comment type="function">
    <text evidence="7 8">Adapter protein that functions as a clathrin-associated sorting protein (CLASP) required for clathrin-mediated endocytosis of selected cargo proteins. Can bind and assemble clathrin, and binds simultaneously to phosphatidylinositol 4,5-bisphosphate (PtdIns(4,5)P2) and cargos containing non-phosphorylated NPXY internalization motifs, such as the LDL receptor, to recruit them to clathrin-coated pits. Can function in clathrin-mediated endocytosis independently of the AP-2 complex. Involved in endocytosis of integrin beta-1; this function seems to redundant with the AP-2 complex and seems to require DAB2 binding to endocytosis accessory EH domain-containing proteins such as EPS15, EPS15L1 and ITSN1. Involved in endocytosis of cystic fibrosis transmembrane conductance regulator/CFTR. Involved in endocytosis of megalin/LRP2 lipoprotein receptor during embryonal development. Required for recycling of the TGF-beta receptor. Involved in CFTR trafficking to the late endosome. Involved in several receptor-mediated signaling pathways. Involved in TGF-beta receptor signaling and facilitates phosphorylation of the signal transducer SMAD2. Mediates TFG-beta-stimulated JNK activation. May inhibit the canoniocal Wnt/beta-catenin signaling pathway by stabilizing the beta-catenin destruction complex through a competing association with axin preventing its dephosphorylation through protein phosphatase 1 (PP1). Sequesters LRP6 towards clathrin-mediated endocytosis, leading to inhibition of Wnt/beta-catenin signaling. May activate non-canonical Wnt signaling. In cell surface growth factor/Ras signaling pathways proposed to inhibit ERK activation by interrupting the binding of GRB2 to SOS1 and to inhibit SRC by preventing its activating phosphorylation at 'Tyr-419'. Proposed to be involved in modulation of androgen receptor (AR) signaling mediated by SRC activation; seems to compete with AR for interaction with SRC. Plays a role in the CSF-1 signal transduction pathway. Plays a role in cellular differentiation. Involved in cell positioning and formation of visceral endoderm (VE) during embryogenesis and proposed to be required in the VE to respond to Nodal signaling coming from the epiblast. Required for the epithelial to mesenchymal transition, a process necessary for proper embryonic development. May be involved in myeloid cell differentiation and can induce macrophage adhesion and spreading. May act as a tumor suppressor.</text>
</comment>
<comment type="subunit">
    <text evidence="6 7 9 13">Can interact (via PID domain) with LDLR, APP, APLP1 and APLP2, and weakly with INPP5D (via NPXY motifs); the interaction is impaired by tyrosine phosphorylation of the respective NPXY motifs. Can weakly interact (via PID domain) with LRP1 (via NPXY motif); the interaction is enhanced by tyrosine phosphorylation of the NPXY motif. Interacts with LRP2 (via NPXY motif); the interaction is not affected by tyrosine phosphorylation of the NPXY motif. Interacts with clathrin; in vitro can assemble clathrin triskelia into polyhedral coats. Interacts with AP2A2, ITGB1, ITGB3, ITGB5, PIAS2, DAB2IP, NOSTRIN, FCHO1, DVL3, EPS15, ITSN1 and EPS15L1. Interacts with SH3KBP1 (via SH3 domains). Interacts with GRB2; competes with SOS1 for binding to GRB2 and the interaction is enhanced by EGF and NT-3 stimulation. Interacts with MAP3K7; the interaction is induced by TGF-beta stimulation and may mediate TGF-beta stimulated JNK activation. Interacts with AXIN1 and PPP1CA; the interactions are mutually exclusive. Interacts with the globular tail of MYO6. Interacts (via DPF motifs) with FCHO2; the interaction is direct and required for DAB2-mediated LDLR endocytosis. Interacts with LRP6; the interaction involves LRP6 phosphorylation by CK2 and sequesters LRP6 towards clathrin-mediated endocytosis. Associates with the TGF-beta receptor complex (Probable). Interacts with SMAD2 and SMAD3; the interactions are enhanced upon TGF-beta stimulation. Interacts with GRB2; the interaction is enhanced by EGF and NT-3 stimulation. Interacts with SRC; the interaction is enhanced by EGF stimulation. Interacts with GRB2; the interaction is enhanced by EGF and NT-3 stimulation. Interacts (via NPXY motif) with DAB2 (via PID domain).</text>
</comment>
<comment type="interaction">
    <interactant intactId="EBI-6109302">
        <id>O88797</id>
    </interactant>
    <interactant intactId="EBI-6306650">
        <id>P98158</id>
        <label>Lrp2</label>
    </interactant>
    <organismsDiffer>false</organismsDiffer>
    <experiments>2</experiments>
</comment>
<comment type="interaction">
    <interactant intactId="EBI-6109302">
        <id>O88797</id>
    </interactant>
    <interactant intactId="EBI-1032676">
        <id>P52800</id>
        <label>Efnb2</label>
    </interactant>
    <organismsDiffer>true</organismsDiffer>
    <experiments>2</experiments>
</comment>
<comment type="subcellular location">
    <subcellularLocation>
        <location evidence="1">Cytoplasm</location>
    </subcellularLocation>
    <subcellularLocation>
        <location>Cytoplasmic vesicle</location>
        <location>Clathrin-coated vesicle membrane</location>
    </subcellularLocation>
    <subcellularLocation>
        <location>Membrane</location>
        <location>Clathrin-coated pit</location>
    </subcellularLocation>
    <text evidence="1">Colocalizes with large insert-containing isoforms of MYO6 at clathrin-coated pits/vesicles. During mitosis is progressively displaced from the membrane and translocated to the cytoplasm (By similarity).</text>
</comment>
<comment type="alternative products">
    <event type="alternative splicing"/>
    <isoform>
        <id>O88797-1</id>
        <name>p82</name>
        <sequence type="displayed"/>
    </isoform>
    <isoform>
        <id>O88797-2</id>
        <name>p59</name>
        <sequence type="described" ref="VSP_004184"/>
    </isoform>
</comment>
<comment type="tissue specificity">
    <text evidence="11">Prostate.</text>
</comment>
<comment type="domain">
    <text evidence="1">The PID domain binds to predominantly non-phosphorylated NPXY internalization motifs present in members of the LDLR and APP family; it also mediates simultaneous binding to phosphatidylinositol 4,5-bisphosphate.</text>
</comment>
<comment type="domain">
    <text evidence="1">The Asn-Pro-Phe (NPF) motifs, which are found in proteins involved in the endocytic pathway, mediate the interaction with the EH domain of EPS15, EPS15R and ITSN1.</text>
</comment>
<comment type="PTM">
    <text evidence="10">Phosphorylated. Phosphorylation during mitosis is leading to membrane displacement. There is some ambiguity for the mitotic phosphosite Ser-326/328.</text>
</comment>
<organism>
    <name type="scientific">Rattus norvegicus</name>
    <name type="common">Rat</name>
    <dbReference type="NCBI Taxonomy" id="10116"/>
    <lineage>
        <taxon>Eukaryota</taxon>
        <taxon>Metazoa</taxon>
        <taxon>Chordata</taxon>
        <taxon>Craniata</taxon>
        <taxon>Vertebrata</taxon>
        <taxon>Euteleostomi</taxon>
        <taxon>Mammalia</taxon>
        <taxon>Eutheria</taxon>
        <taxon>Euarchontoglires</taxon>
        <taxon>Glires</taxon>
        <taxon>Rodentia</taxon>
        <taxon>Myomorpha</taxon>
        <taxon>Muroidea</taxon>
        <taxon>Muridae</taxon>
        <taxon>Murinae</taxon>
        <taxon>Rattus</taxon>
    </lineage>
</organism>
<dbReference type="EMBL" id="U95177">
    <property type="protein sequence ID" value="AAC33405.1"/>
    <property type="molecule type" value="mRNA"/>
</dbReference>
<dbReference type="EMBL" id="U95178">
    <property type="protein sequence ID" value="AAC33406.1"/>
    <property type="molecule type" value="mRNA"/>
</dbReference>
<dbReference type="EMBL" id="BC097314">
    <property type="protein sequence ID" value="AAH97314.1"/>
    <property type="molecule type" value="mRNA"/>
</dbReference>
<dbReference type="EMBL" id="AF045657">
    <property type="protein sequence ID" value="AAC03360.1"/>
    <property type="molecule type" value="mRNA"/>
</dbReference>
<dbReference type="EMBL" id="AF045658">
    <property type="protein sequence ID" value="AAC03361.1"/>
    <property type="molecule type" value="mRNA"/>
</dbReference>
<dbReference type="EMBL" id="AF045659">
    <property type="protein sequence ID" value="AAC03362.1"/>
    <property type="molecule type" value="mRNA"/>
</dbReference>
<dbReference type="EMBL" id="AF045660">
    <property type="protein sequence ID" value="AAC03363.1"/>
    <property type="molecule type" value="mRNA"/>
</dbReference>
<dbReference type="RefSeq" id="NP_077073.1">
    <molecule id="O88797-1"/>
    <property type="nucleotide sequence ID" value="NM_024159.2"/>
</dbReference>
<dbReference type="RefSeq" id="XP_038959120.1">
    <molecule id="O88797-1"/>
    <property type="nucleotide sequence ID" value="XM_039103192.2"/>
</dbReference>
<dbReference type="RefSeq" id="XP_038959121.1">
    <molecule id="O88797-2"/>
    <property type="nucleotide sequence ID" value="XM_039103193.2"/>
</dbReference>
<dbReference type="RefSeq" id="XP_063138679.1">
    <molecule id="O88797-2"/>
    <property type="nucleotide sequence ID" value="XM_063282609.1"/>
</dbReference>
<dbReference type="PDB" id="3H8D">
    <property type="method" value="X-ray"/>
    <property type="resolution" value="2.20 A"/>
    <property type="chains" value="E/F/G/H=675-713"/>
</dbReference>
<dbReference type="PDBsum" id="3H8D"/>
<dbReference type="BMRB" id="O88797"/>
<dbReference type="SMR" id="O88797"/>
<dbReference type="BioGRID" id="249412">
    <property type="interactions" value="1"/>
</dbReference>
<dbReference type="DIP" id="DIP-60713N"/>
<dbReference type="FunCoup" id="O88797">
    <property type="interactions" value="538"/>
</dbReference>
<dbReference type="IntAct" id="O88797">
    <property type="interactions" value="5"/>
</dbReference>
<dbReference type="MINT" id="O88797"/>
<dbReference type="STRING" id="10116.ENSRNOP00000043878"/>
<dbReference type="GlyGen" id="O88797">
    <property type="glycosylation" value="2 sites, 1 O-linked glycan (1 site)"/>
</dbReference>
<dbReference type="iPTMnet" id="O88797"/>
<dbReference type="PhosphoSitePlus" id="O88797"/>
<dbReference type="PaxDb" id="10116-ENSRNOP00000043878"/>
<dbReference type="Ensembl" id="ENSRNOT00000050655.6">
    <molecule id="O88797-1"/>
    <property type="protein sequence ID" value="ENSRNOP00000043878.5"/>
    <property type="gene ID" value="ENSRNOG00000028930.7"/>
</dbReference>
<dbReference type="Ensembl" id="ENSRNOT00000107345.1">
    <molecule id="O88797-2"/>
    <property type="protein sequence ID" value="ENSRNOP00000085574.1"/>
    <property type="gene ID" value="ENSRNOG00000028930.7"/>
</dbReference>
<dbReference type="GeneID" id="79128"/>
<dbReference type="KEGG" id="rno:79128"/>
<dbReference type="UCSC" id="RGD:621007">
    <molecule id="O88797-1"/>
    <property type="organism name" value="rat"/>
</dbReference>
<dbReference type="AGR" id="RGD:621007"/>
<dbReference type="CTD" id="1601"/>
<dbReference type="RGD" id="621007">
    <property type="gene designation" value="Dab2"/>
</dbReference>
<dbReference type="eggNOG" id="KOG3535">
    <property type="taxonomic scope" value="Eukaryota"/>
</dbReference>
<dbReference type="GeneTree" id="ENSGT00940000155567"/>
<dbReference type="InParanoid" id="O88797"/>
<dbReference type="OMA" id="FMSHEPI"/>
<dbReference type="OrthoDB" id="10069833at2759"/>
<dbReference type="PhylomeDB" id="O88797"/>
<dbReference type="Reactome" id="R-RNO-190873">
    <property type="pathway name" value="Gap junction degradation"/>
</dbReference>
<dbReference type="Reactome" id="R-RNO-196025">
    <property type="pathway name" value="Formation of annular gap junctions"/>
</dbReference>
<dbReference type="Reactome" id="R-RNO-8856825">
    <property type="pathway name" value="Cargo recognition for clathrin-mediated endocytosis"/>
</dbReference>
<dbReference type="Reactome" id="R-RNO-8856828">
    <property type="pathway name" value="Clathrin-mediated endocytosis"/>
</dbReference>
<dbReference type="EvolutionaryTrace" id="O88797"/>
<dbReference type="PRO" id="PR:O88797"/>
<dbReference type="Proteomes" id="UP000002494">
    <property type="component" value="Chromosome 2"/>
</dbReference>
<dbReference type="GO" id="GO:0016324">
    <property type="term" value="C:apical plasma membrane"/>
    <property type="evidence" value="ECO:0000266"/>
    <property type="project" value="RGD"/>
</dbReference>
<dbReference type="GO" id="GO:0030132">
    <property type="term" value="C:clathrin coat of coated pit"/>
    <property type="evidence" value="ECO:0000266"/>
    <property type="project" value="RGD"/>
</dbReference>
<dbReference type="GO" id="GO:0005905">
    <property type="term" value="C:clathrin-coated pit"/>
    <property type="evidence" value="ECO:0000266"/>
    <property type="project" value="RGD"/>
</dbReference>
<dbReference type="GO" id="GO:0030136">
    <property type="term" value="C:clathrin-coated vesicle"/>
    <property type="evidence" value="ECO:0000266"/>
    <property type="project" value="RGD"/>
</dbReference>
<dbReference type="GO" id="GO:0030665">
    <property type="term" value="C:clathrin-coated vesicle membrane"/>
    <property type="evidence" value="ECO:0000314"/>
    <property type="project" value="RGD"/>
</dbReference>
<dbReference type="GO" id="GO:0005737">
    <property type="term" value="C:cytoplasm"/>
    <property type="evidence" value="ECO:0000318"/>
    <property type="project" value="GO_Central"/>
</dbReference>
<dbReference type="GO" id="GO:0001650">
    <property type="term" value="C:fibrillar center"/>
    <property type="evidence" value="ECO:0007669"/>
    <property type="project" value="Ensembl"/>
</dbReference>
<dbReference type="GO" id="GO:0043231">
    <property type="term" value="C:intracellular membrane-bounded organelle"/>
    <property type="evidence" value="ECO:0000318"/>
    <property type="project" value="GO_Central"/>
</dbReference>
<dbReference type="GO" id="GO:0048471">
    <property type="term" value="C:perinuclear region of cytoplasm"/>
    <property type="evidence" value="ECO:0000314"/>
    <property type="project" value="RGD"/>
</dbReference>
<dbReference type="GO" id="GO:0005886">
    <property type="term" value="C:plasma membrane"/>
    <property type="evidence" value="ECO:0000266"/>
    <property type="project" value="RGD"/>
</dbReference>
<dbReference type="GO" id="GO:0035612">
    <property type="term" value="F:AP-2 adaptor complex binding"/>
    <property type="evidence" value="ECO:0000266"/>
    <property type="project" value="RGD"/>
</dbReference>
<dbReference type="GO" id="GO:0038024">
    <property type="term" value="F:cargo receptor activity"/>
    <property type="evidence" value="ECO:0000266"/>
    <property type="project" value="RGD"/>
</dbReference>
<dbReference type="GO" id="GO:0035615">
    <property type="term" value="F:clathrin adaptor activity"/>
    <property type="evidence" value="ECO:0000266"/>
    <property type="project" value="RGD"/>
</dbReference>
<dbReference type="GO" id="GO:0030276">
    <property type="term" value="F:clathrin binding"/>
    <property type="evidence" value="ECO:0000266"/>
    <property type="project" value="RGD"/>
</dbReference>
<dbReference type="GO" id="GO:0005178">
    <property type="term" value="F:integrin binding"/>
    <property type="evidence" value="ECO:0000266"/>
    <property type="project" value="RGD"/>
</dbReference>
<dbReference type="GO" id="GO:0050750">
    <property type="term" value="F:low-density lipoprotein particle receptor binding"/>
    <property type="evidence" value="ECO:0000353"/>
    <property type="project" value="ARUK-UCL"/>
</dbReference>
<dbReference type="GO" id="GO:0035091">
    <property type="term" value="F:phosphatidylinositol binding"/>
    <property type="evidence" value="ECO:0000266"/>
    <property type="project" value="RGD"/>
</dbReference>
<dbReference type="GO" id="GO:0005546">
    <property type="term" value="F:phosphatidylinositol-4,5-bisphosphate binding"/>
    <property type="evidence" value="ECO:0000266"/>
    <property type="project" value="RGD"/>
</dbReference>
<dbReference type="GO" id="GO:0046332">
    <property type="term" value="F:SMAD binding"/>
    <property type="evidence" value="ECO:0000266"/>
    <property type="project" value="RGD"/>
</dbReference>
<dbReference type="GO" id="GO:0000902">
    <property type="term" value="P:cell morphogenesis"/>
    <property type="evidence" value="ECO:0000266"/>
    <property type="project" value="RGD"/>
</dbReference>
<dbReference type="GO" id="GO:0071364">
    <property type="term" value="P:cellular response to epidermal growth factor stimulus"/>
    <property type="evidence" value="ECO:0000314"/>
    <property type="project" value="UniProtKB"/>
</dbReference>
<dbReference type="GO" id="GO:0071560">
    <property type="term" value="P:cellular response to transforming growth factor beta stimulus"/>
    <property type="evidence" value="ECO:0000270"/>
    <property type="project" value="RGD"/>
</dbReference>
<dbReference type="GO" id="GO:0048268">
    <property type="term" value="P:clathrin coat assembly"/>
    <property type="evidence" value="ECO:0000315"/>
    <property type="project" value="RGD"/>
</dbReference>
<dbReference type="GO" id="GO:0097191">
    <property type="term" value="P:extrinsic apoptotic signaling pathway"/>
    <property type="evidence" value="ECO:0000266"/>
    <property type="project" value="RGD"/>
</dbReference>
<dbReference type="GO" id="GO:0071425">
    <property type="term" value="P:hematopoietic stem cell proliferation"/>
    <property type="evidence" value="ECO:0000266"/>
    <property type="project" value="RGD"/>
</dbReference>
<dbReference type="GO" id="GO:0001701">
    <property type="term" value="P:in utero embryonic development"/>
    <property type="evidence" value="ECO:0000266"/>
    <property type="project" value="RGD"/>
</dbReference>
<dbReference type="GO" id="GO:0035026">
    <property type="term" value="P:leading edge cell differentiation"/>
    <property type="evidence" value="ECO:0000266"/>
    <property type="project" value="RGD"/>
</dbReference>
<dbReference type="GO" id="GO:0030099">
    <property type="term" value="P:myeloid cell differentiation"/>
    <property type="evidence" value="ECO:0000266"/>
    <property type="project" value="RGD"/>
</dbReference>
<dbReference type="GO" id="GO:0060766">
    <property type="term" value="P:negative regulation of androgen receptor signaling pathway"/>
    <property type="evidence" value="ECO:0000266"/>
    <property type="project" value="RGD"/>
</dbReference>
<dbReference type="GO" id="GO:0043066">
    <property type="term" value="P:negative regulation of apoptotic process"/>
    <property type="evidence" value="ECO:0000266"/>
    <property type="project" value="RGD"/>
</dbReference>
<dbReference type="GO" id="GO:0090090">
    <property type="term" value="P:negative regulation of canonical Wnt signaling pathway"/>
    <property type="evidence" value="ECO:0000316"/>
    <property type="project" value="BHF-UCL"/>
</dbReference>
<dbReference type="GO" id="GO:0030308">
    <property type="term" value="P:negative regulation of cell growth"/>
    <property type="evidence" value="ECO:0000315"/>
    <property type="project" value="RGD"/>
</dbReference>
<dbReference type="GO" id="GO:0050680">
    <property type="term" value="P:negative regulation of epithelial cell proliferation"/>
    <property type="evidence" value="ECO:0000314"/>
    <property type="project" value="RGD"/>
</dbReference>
<dbReference type="GO" id="GO:0070373">
    <property type="term" value="P:negative regulation of ERK1 and ERK2 cascade"/>
    <property type="evidence" value="ECO:0000314"/>
    <property type="project" value="UniProtKB"/>
</dbReference>
<dbReference type="GO" id="GO:2001237">
    <property type="term" value="P:negative regulation of extrinsic apoptotic signaling pathway"/>
    <property type="evidence" value="ECO:0000266"/>
    <property type="project" value="RGD"/>
</dbReference>
<dbReference type="GO" id="GO:0010977">
    <property type="term" value="P:negative regulation of neuron projection development"/>
    <property type="evidence" value="ECO:0000314"/>
    <property type="project" value="RGD"/>
</dbReference>
<dbReference type="GO" id="GO:1903077">
    <property type="term" value="P:negative regulation of protein localization to plasma membrane"/>
    <property type="evidence" value="ECO:0000266"/>
    <property type="project" value="RGD"/>
</dbReference>
<dbReference type="GO" id="GO:0000122">
    <property type="term" value="P:negative regulation of transcription by RNA polymerase II"/>
    <property type="evidence" value="ECO:0000266"/>
    <property type="project" value="RGD"/>
</dbReference>
<dbReference type="GO" id="GO:0032349">
    <property type="term" value="P:positive regulation of aldosterone biosynthetic process"/>
    <property type="evidence" value="ECO:0000314"/>
    <property type="project" value="RGD"/>
</dbReference>
<dbReference type="GO" id="GO:2000860">
    <property type="term" value="P:positive regulation of aldosterone secretion"/>
    <property type="evidence" value="ECO:0000314"/>
    <property type="project" value="RGD"/>
</dbReference>
<dbReference type="GO" id="GO:0045785">
    <property type="term" value="P:positive regulation of cell adhesion"/>
    <property type="evidence" value="ECO:0000266"/>
    <property type="project" value="RGD"/>
</dbReference>
<dbReference type="GO" id="GO:0030335">
    <property type="term" value="P:positive regulation of cell migration"/>
    <property type="evidence" value="ECO:0000266"/>
    <property type="project" value="RGD"/>
</dbReference>
<dbReference type="GO" id="GO:2000370">
    <property type="term" value="P:positive regulation of clathrin-dependent endocytosis"/>
    <property type="evidence" value="ECO:0000266"/>
    <property type="project" value="RGD"/>
</dbReference>
<dbReference type="GO" id="GO:2000643">
    <property type="term" value="P:positive regulation of early endosome to late endosome transport"/>
    <property type="evidence" value="ECO:0000266"/>
    <property type="project" value="RGD"/>
</dbReference>
<dbReference type="GO" id="GO:0045807">
    <property type="term" value="P:positive regulation of endocytosis"/>
    <property type="evidence" value="ECO:0000314"/>
    <property type="project" value="RGD"/>
</dbReference>
<dbReference type="GO" id="GO:0010718">
    <property type="term" value="P:positive regulation of epithelial to mesenchymal transition"/>
    <property type="evidence" value="ECO:0000266"/>
    <property type="project" value="RGD"/>
</dbReference>
<dbReference type="GO" id="GO:2001046">
    <property type="term" value="P:positive regulation of integrin-mediated signaling pathway"/>
    <property type="evidence" value="ECO:0000266"/>
    <property type="project" value="RGD"/>
</dbReference>
<dbReference type="GO" id="GO:0046330">
    <property type="term" value="P:positive regulation of JNK cascade"/>
    <property type="evidence" value="ECO:0000266"/>
    <property type="project" value="RGD"/>
</dbReference>
<dbReference type="GO" id="GO:0032436">
    <property type="term" value="P:positive regulation of proteasomal ubiquitin-dependent protein catabolic process"/>
    <property type="evidence" value="ECO:0000266"/>
    <property type="project" value="RGD"/>
</dbReference>
<dbReference type="GO" id="GO:0002092">
    <property type="term" value="P:positive regulation of receptor internalization"/>
    <property type="evidence" value="ECO:0000266"/>
    <property type="project" value="RGD"/>
</dbReference>
<dbReference type="GO" id="GO:0001921">
    <property type="term" value="P:positive regulation of receptor recycling"/>
    <property type="evidence" value="ECO:0000266"/>
    <property type="project" value="RGD"/>
</dbReference>
<dbReference type="GO" id="GO:0060391">
    <property type="term" value="P:positive regulation of SMAD protein signal transduction"/>
    <property type="evidence" value="ECO:0000266"/>
    <property type="project" value="RGD"/>
</dbReference>
<dbReference type="GO" id="GO:1900026">
    <property type="term" value="P:positive regulation of substrate adhesion-dependent cell spreading"/>
    <property type="evidence" value="ECO:0000315"/>
    <property type="project" value="RGD"/>
</dbReference>
<dbReference type="GO" id="GO:0045944">
    <property type="term" value="P:positive regulation of transcription by RNA polymerase II"/>
    <property type="evidence" value="ECO:0000266"/>
    <property type="project" value="RGD"/>
</dbReference>
<dbReference type="GO" id="GO:0032968">
    <property type="term" value="P:positive regulation of transcription elongation by RNA polymerase II"/>
    <property type="evidence" value="ECO:0000266"/>
    <property type="project" value="RGD"/>
</dbReference>
<dbReference type="GO" id="GO:2000096">
    <property type="term" value="P:positive regulation of Wnt signaling pathway, planar cell polarity pathway"/>
    <property type="evidence" value="ECO:0000266"/>
    <property type="project" value="RGD"/>
</dbReference>
<dbReference type="GO" id="GO:0015031">
    <property type="term" value="P:protein transport"/>
    <property type="evidence" value="ECO:0007669"/>
    <property type="project" value="UniProtKB-KW"/>
</dbReference>
<dbReference type="GO" id="GO:0006898">
    <property type="term" value="P:receptor-mediated endocytosis"/>
    <property type="evidence" value="ECO:0000266"/>
    <property type="project" value="RGD"/>
</dbReference>
<dbReference type="GO" id="GO:0097017">
    <property type="term" value="P:renal protein absorption"/>
    <property type="evidence" value="ECO:0000266"/>
    <property type="project" value="RGD"/>
</dbReference>
<dbReference type="GO" id="GO:1902074">
    <property type="term" value="P:response to salt"/>
    <property type="evidence" value="ECO:0000270"/>
    <property type="project" value="RGD"/>
</dbReference>
<dbReference type="GO" id="GO:0048545">
    <property type="term" value="P:response to steroid hormone"/>
    <property type="evidence" value="ECO:0000315"/>
    <property type="project" value="RGD"/>
</dbReference>
<dbReference type="GO" id="GO:0007179">
    <property type="term" value="P:transforming growth factor beta receptor signaling pathway"/>
    <property type="evidence" value="ECO:0000266"/>
    <property type="project" value="RGD"/>
</dbReference>
<dbReference type="GO" id="GO:0016055">
    <property type="term" value="P:Wnt signaling pathway"/>
    <property type="evidence" value="ECO:0007669"/>
    <property type="project" value="UniProtKB-KW"/>
</dbReference>
<dbReference type="CDD" id="cd01215">
    <property type="entry name" value="PTB_Dab"/>
    <property type="match status" value="1"/>
</dbReference>
<dbReference type="FunFam" id="2.30.29.30:FF:000035">
    <property type="entry name" value="Disabled homolog 2 isoform 1"/>
    <property type="match status" value="1"/>
</dbReference>
<dbReference type="Gene3D" id="2.30.29.30">
    <property type="entry name" value="Pleckstrin-homology domain (PH domain)/Phosphotyrosine-binding domain (PTB)"/>
    <property type="match status" value="1"/>
</dbReference>
<dbReference type="InterPro" id="IPR048559">
    <property type="entry name" value="DAB1/2_SBM"/>
</dbReference>
<dbReference type="InterPro" id="IPR048561">
    <property type="entry name" value="Dab_PTB"/>
</dbReference>
<dbReference type="InterPro" id="IPR011993">
    <property type="entry name" value="PH-like_dom_sf"/>
</dbReference>
<dbReference type="InterPro" id="IPR006020">
    <property type="entry name" value="PTB/PI_dom"/>
</dbReference>
<dbReference type="PANTHER" id="PTHR47695:SF5">
    <property type="entry name" value="DISABLED HOMOLOG 2"/>
    <property type="match status" value="1"/>
</dbReference>
<dbReference type="PANTHER" id="PTHR47695">
    <property type="entry name" value="PID DOMAIN-CONTAINING PROTEIN"/>
    <property type="match status" value="1"/>
</dbReference>
<dbReference type="Pfam" id="PF21792">
    <property type="entry name" value="DAB2_SBM"/>
    <property type="match status" value="1"/>
</dbReference>
<dbReference type="Pfam" id="PF00640">
    <property type="entry name" value="PID"/>
    <property type="match status" value="1"/>
</dbReference>
<dbReference type="SMART" id="SM00462">
    <property type="entry name" value="PTB"/>
    <property type="match status" value="1"/>
</dbReference>
<dbReference type="SUPFAM" id="SSF50729">
    <property type="entry name" value="PH domain-like"/>
    <property type="match status" value="1"/>
</dbReference>
<dbReference type="PROSITE" id="PS01179">
    <property type="entry name" value="PID"/>
    <property type="match status" value="1"/>
</dbReference>
<accession>O88797</accession>
<accession>O55048</accession>
<accession>O55049</accession>
<accession>O55050</accession>
<accession>O55051</accession>
<accession>O88798</accession>
<accession>Q4QRA2</accession>
<keyword id="KW-0002">3D-structure</keyword>
<keyword id="KW-0007">Acetylation</keyword>
<keyword id="KW-0025">Alternative splicing</keyword>
<keyword id="KW-0053">Apoptosis</keyword>
<keyword id="KW-0168">Coated pit</keyword>
<keyword id="KW-0963">Cytoplasm</keyword>
<keyword id="KW-0968">Cytoplasmic vesicle</keyword>
<keyword id="KW-0217">Developmental protein</keyword>
<keyword id="KW-0221">Differentiation</keyword>
<keyword id="KW-0254">Endocytosis</keyword>
<keyword id="KW-0472">Membrane</keyword>
<keyword id="KW-0597">Phosphoprotein</keyword>
<keyword id="KW-0653">Protein transport</keyword>
<keyword id="KW-1185">Reference proteome</keyword>
<keyword id="KW-0813">Transport</keyword>
<keyword id="KW-0879">Wnt signaling pathway</keyword>